<gene>
    <name type="primary">bdf1</name>
    <name type="synonym">brf1</name>
    <name type="ORF">SPCC1450.02</name>
    <name type="ORF">SPCC191.13</name>
</gene>
<accession>Q9Y7N0</accession>
<accession>Q9UUN2</accession>
<keyword id="KW-0002">3D-structure</keyword>
<keyword id="KW-0010">Activator</keyword>
<keyword id="KW-0103">Bromodomain</keyword>
<keyword id="KW-0156">Chromatin regulator</keyword>
<keyword id="KW-0539">Nucleus</keyword>
<keyword id="KW-0597">Phosphoprotein</keyword>
<keyword id="KW-1185">Reference proteome</keyword>
<keyword id="KW-0677">Repeat</keyword>
<keyword id="KW-0804">Transcription</keyword>
<keyword id="KW-0805">Transcription regulation</keyword>
<name>BDF1_SCHPO</name>
<reference key="1">
    <citation type="journal article" date="2002" name="Nature">
        <title>The genome sequence of Schizosaccharomyces pombe.</title>
        <authorList>
            <person name="Wood V."/>
            <person name="Gwilliam R."/>
            <person name="Rajandream M.A."/>
            <person name="Lyne M.H."/>
            <person name="Lyne R."/>
            <person name="Stewart A."/>
            <person name="Sgouros J.G."/>
            <person name="Peat N."/>
            <person name="Hayles J."/>
            <person name="Baker S.G."/>
            <person name="Basham D."/>
            <person name="Bowman S."/>
            <person name="Brooks K."/>
            <person name="Brown D."/>
            <person name="Brown S."/>
            <person name="Chillingworth T."/>
            <person name="Churcher C.M."/>
            <person name="Collins M."/>
            <person name="Connor R."/>
            <person name="Cronin A."/>
            <person name="Davis P."/>
            <person name="Feltwell T."/>
            <person name="Fraser A."/>
            <person name="Gentles S."/>
            <person name="Goble A."/>
            <person name="Hamlin N."/>
            <person name="Harris D.E."/>
            <person name="Hidalgo J."/>
            <person name="Hodgson G."/>
            <person name="Holroyd S."/>
            <person name="Hornsby T."/>
            <person name="Howarth S."/>
            <person name="Huckle E.J."/>
            <person name="Hunt S."/>
            <person name="Jagels K."/>
            <person name="James K.D."/>
            <person name="Jones L."/>
            <person name="Jones M."/>
            <person name="Leather S."/>
            <person name="McDonald S."/>
            <person name="McLean J."/>
            <person name="Mooney P."/>
            <person name="Moule S."/>
            <person name="Mungall K.L."/>
            <person name="Murphy L.D."/>
            <person name="Niblett D."/>
            <person name="Odell C."/>
            <person name="Oliver K."/>
            <person name="O'Neil S."/>
            <person name="Pearson D."/>
            <person name="Quail M.A."/>
            <person name="Rabbinowitsch E."/>
            <person name="Rutherford K.M."/>
            <person name="Rutter S."/>
            <person name="Saunders D."/>
            <person name="Seeger K."/>
            <person name="Sharp S."/>
            <person name="Skelton J."/>
            <person name="Simmonds M.N."/>
            <person name="Squares R."/>
            <person name="Squares S."/>
            <person name="Stevens K."/>
            <person name="Taylor K."/>
            <person name="Taylor R.G."/>
            <person name="Tivey A."/>
            <person name="Walsh S.V."/>
            <person name="Warren T."/>
            <person name="Whitehead S."/>
            <person name="Woodward J.R."/>
            <person name="Volckaert G."/>
            <person name="Aert R."/>
            <person name="Robben J."/>
            <person name="Grymonprez B."/>
            <person name="Weltjens I."/>
            <person name="Vanstreels E."/>
            <person name="Rieger M."/>
            <person name="Schaefer M."/>
            <person name="Mueller-Auer S."/>
            <person name="Gabel C."/>
            <person name="Fuchs M."/>
            <person name="Duesterhoeft A."/>
            <person name="Fritzc C."/>
            <person name="Holzer E."/>
            <person name="Moestl D."/>
            <person name="Hilbert H."/>
            <person name="Borzym K."/>
            <person name="Langer I."/>
            <person name="Beck A."/>
            <person name="Lehrach H."/>
            <person name="Reinhardt R."/>
            <person name="Pohl T.M."/>
            <person name="Eger P."/>
            <person name="Zimmermann W."/>
            <person name="Wedler H."/>
            <person name="Wambutt R."/>
            <person name="Purnelle B."/>
            <person name="Goffeau A."/>
            <person name="Cadieu E."/>
            <person name="Dreano S."/>
            <person name="Gloux S."/>
            <person name="Lelaure V."/>
            <person name="Mottier S."/>
            <person name="Galibert F."/>
            <person name="Aves S.J."/>
            <person name="Xiang Z."/>
            <person name="Hunt C."/>
            <person name="Moore K."/>
            <person name="Hurst S.M."/>
            <person name="Lucas M."/>
            <person name="Rochet M."/>
            <person name="Gaillardin C."/>
            <person name="Tallada V.A."/>
            <person name="Garzon A."/>
            <person name="Thode G."/>
            <person name="Daga R.R."/>
            <person name="Cruzado L."/>
            <person name="Jimenez J."/>
            <person name="Sanchez M."/>
            <person name="del Rey F."/>
            <person name="Benito J."/>
            <person name="Dominguez A."/>
            <person name="Revuelta J.L."/>
            <person name="Moreno S."/>
            <person name="Armstrong J."/>
            <person name="Forsburg S.L."/>
            <person name="Cerutti L."/>
            <person name="Lowe T."/>
            <person name="McCombie W.R."/>
            <person name="Paulsen I."/>
            <person name="Potashkin J."/>
            <person name="Shpakovski G.V."/>
            <person name="Ussery D."/>
            <person name="Barrell B.G."/>
            <person name="Nurse P."/>
        </authorList>
    </citation>
    <scope>NUCLEOTIDE SEQUENCE [LARGE SCALE GENOMIC DNA]</scope>
    <source>
        <strain>972 / ATCC 24843</strain>
    </source>
</reference>
<reference key="2">
    <citation type="journal article" date="2006" name="Nat. Biotechnol.">
        <title>ORFeome cloning and global analysis of protein localization in the fission yeast Schizosaccharomyces pombe.</title>
        <authorList>
            <person name="Matsuyama A."/>
            <person name="Arai R."/>
            <person name="Yashiroda Y."/>
            <person name="Shirai A."/>
            <person name="Kamata A."/>
            <person name="Sekido S."/>
            <person name="Kobayashi Y."/>
            <person name="Hashimoto A."/>
            <person name="Hamamoto M."/>
            <person name="Hiraoka Y."/>
            <person name="Horinouchi S."/>
            <person name="Yoshida M."/>
        </authorList>
    </citation>
    <scope>SUBCELLULAR LOCATION [LARGE SCALE ANALYSIS]</scope>
</reference>
<reference key="3">
    <citation type="journal article" date="2008" name="J. Proteome Res.">
        <title>Phosphoproteome analysis of fission yeast.</title>
        <authorList>
            <person name="Wilson-Grady J.T."/>
            <person name="Villen J."/>
            <person name="Gygi S.P."/>
        </authorList>
    </citation>
    <scope>PHOSPHORYLATION [LARGE SCALE ANALYSIS] AT SER-221; SER-223; SER-224; THR-225; SER-226; SER-239 AND SER-511</scope>
    <scope>IDENTIFICATION BY MASS SPECTROMETRY</scope>
</reference>
<reference key="4">
    <citation type="journal article" date="2008" name="Genome Biol.">
        <title>Chromatin Central: towards the comparative proteome by accurate mapping of the yeast proteomic environment.</title>
        <authorList>
            <person name="Shevchenko A."/>
            <person name="Roguev A."/>
            <person name="Schaft D."/>
            <person name="Buchanan L."/>
            <person name="Habermann B."/>
            <person name="Sakalar C."/>
            <person name="Thomas H."/>
            <person name="Krogan N.J."/>
            <person name="Shevchenko A."/>
            <person name="Stewart A.F."/>
        </authorList>
    </citation>
    <scope>IDENTIFICATION IN THE SWR1 COMPLEX</scope>
    <scope>IDENTIFICATION BY MASS SPECTROMETRY</scope>
</reference>
<protein>
    <recommendedName>
        <fullName>SWR1 complex bromodomain subunit bdf1</fullName>
    </recommendedName>
</protein>
<organism>
    <name type="scientific">Schizosaccharomyces pombe (strain 972 / ATCC 24843)</name>
    <name type="common">Fission yeast</name>
    <dbReference type="NCBI Taxonomy" id="284812"/>
    <lineage>
        <taxon>Eukaryota</taxon>
        <taxon>Fungi</taxon>
        <taxon>Dikarya</taxon>
        <taxon>Ascomycota</taxon>
        <taxon>Taphrinomycotina</taxon>
        <taxon>Schizosaccharomycetes</taxon>
        <taxon>Schizosaccharomycetales</taxon>
        <taxon>Schizosaccharomycetaceae</taxon>
        <taxon>Schizosaccharomyces</taxon>
    </lineage>
</organism>
<dbReference type="EMBL" id="CU329672">
    <property type="protein sequence ID" value="CAB41059.2"/>
    <property type="molecule type" value="Genomic_DNA"/>
</dbReference>
<dbReference type="PIR" id="T40984">
    <property type="entry name" value="T40984"/>
</dbReference>
<dbReference type="RefSeq" id="NP_588301.2">
    <property type="nucleotide sequence ID" value="NM_001023291.2"/>
</dbReference>
<dbReference type="PDB" id="9JA5">
    <property type="method" value="EM"/>
    <property type="resolution" value="2.70 A"/>
    <property type="chains" value="A/B/C/D/E/F=372-554"/>
</dbReference>
<dbReference type="PDBsum" id="9JA5"/>
<dbReference type="SMR" id="Q9Y7N0"/>
<dbReference type="BioGRID" id="275529">
    <property type="interactions" value="78"/>
</dbReference>
<dbReference type="FunCoup" id="Q9Y7N0">
    <property type="interactions" value="669"/>
</dbReference>
<dbReference type="STRING" id="284812.Q9Y7N0"/>
<dbReference type="iPTMnet" id="Q9Y7N0"/>
<dbReference type="PaxDb" id="4896-SPCC1450.02.1"/>
<dbReference type="EnsemblFungi" id="SPCC1450.02.1">
    <property type="protein sequence ID" value="SPCC1450.02.1:pep"/>
    <property type="gene ID" value="SPCC1450.02"/>
</dbReference>
<dbReference type="GeneID" id="2538955"/>
<dbReference type="KEGG" id="spo:2538955"/>
<dbReference type="PomBase" id="SPCC1450.02">
    <property type="gene designation" value="bdf1"/>
</dbReference>
<dbReference type="VEuPathDB" id="FungiDB:SPCC1450.02"/>
<dbReference type="eggNOG" id="KOG1474">
    <property type="taxonomic scope" value="Eukaryota"/>
</dbReference>
<dbReference type="HOGENOM" id="CLU_001499_4_2_1"/>
<dbReference type="InParanoid" id="Q9Y7N0"/>
<dbReference type="OMA" id="KMNIPHY"/>
<dbReference type="PhylomeDB" id="Q9Y7N0"/>
<dbReference type="PRO" id="PR:Q9Y7N0"/>
<dbReference type="Proteomes" id="UP000002485">
    <property type="component" value="Chromosome III"/>
</dbReference>
<dbReference type="GO" id="GO:0000785">
    <property type="term" value="C:chromatin"/>
    <property type="evidence" value="ECO:0000318"/>
    <property type="project" value="GO_Central"/>
</dbReference>
<dbReference type="GO" id="GO:0005634">
    <property type="term" value="C:nucleus"/>
    <property type="evidence" value="ECO:0007005"/>
    <property type="project" value="PomBase"/>
</dbReference>
<dbReference type="GO" id="GO:0000812">
    <property type="term" value="C:Swr1 complex"/>
    <property type="evidence" value="ECO:0000314"/>
    <property type="project" value="PomBase"/>
</dbReference>
<dbReference type="GO" id="GO:0140463">
    <property type="term" value="F:chromatin-protein adaptor activity"/>
    <property type="evidence" value="ECO:0000269"/>
    <property type="project" value="PomBase"/>
</dbReference>
<dbReference type="GO" id="GO:0006338">
    <property type="term" value="P:chromatin remodeling"/>
    <property type="evidence" value="ECO:0000353"/>
    <property type="project" value="PomBase"/>
</dbReference>
<dbReference type="GO" id="GO:0140861">
    <property type="term" value="P:DNA repair-dependent chromatin remodeling"/>
    <property type="evidence" value="ECO:0000315"/>
    <property type="project" value="PomBase"/>
</dbReference>
<dbReference type="GO" id="GO:0006355">
    <property type="term" value="P:regulation of DNA-templated transcription"/>
    <property type="evidence" value="ECO:0000318"/>
    <property type="project" value="GO_Central"/>
</dbReference>
<dbReference type="GO" id="GO:0045815">
    <property type="term" value="P:transcription initiation-coupled chromatin remodeling"/>
    <property type="evidence" value="ECO:0000305"/>
    <property type="project" value="PomBase"/>
</dbReference>
<dbReference type="CDD" id="cd05500">
    <property type="entry name" value="Bromo_BDF1_2_I"/>
    <property type="match status" value="1"/>
</dbReference>
<dbReference type="CDD" id="cd05498">
    <property type="entry name" value="Bromo_Brdt_II_like"/>
    <property type="match status" value="1"/>
</dbReference>
<dbReference type="FunFam" id="1.20.920.10:FF:000072">
    <property type="entry name" value="Bromodomain-containing factor 2"/>
    <property type="match status" value="1"/>
</dbReference>
<dbReference type="FunFam" id="1.20.1270.220:FF:000011">
    <property type="entry name" value="SWR1 complex bromodomain subunit bdf1"/>
    <property type="match status" value="1"/>
</dbReference>
<dbReference type="Gene3D" id="1.20.1270.220">
    <property type="match status" value="1"/>
</dbReference>
<dbReference type="Gene3D" id="1.20.920.10">
    <property type="entry name" value="Bromodomain-like"/>
    <property type="match status" value="2"/>
</dbReference>
<dbReference type="InterPro" id="IPR043509">
    <property type="entry name" value="Bromo_Brdt_II"/>
</dbReference>
<dbReference type="InterPro" id="IPR050935">
    <property type="entry name" value="Bromo_chromatin_reader"/>
</dbReference>
<dbReference type="InterPro" id="IPR001487">
    <property type="entry name" value="Bromodomain"/>
</dbReference>
<dbReference type="InterPro" id="IPR036427">
    <property type="entry name" value="Bromodomain-like_sf"/>
</dbReference>
<dbReference type="InterPro" id="IPR018359">
    <property type="entry name" value="Bromodomain_CS"/>
</dbReference>
<dbReference type="InterPro" id="IPR027353">
    <property type="entry name" value="NET_dom"/>
</dbReference>
<dbReference type="InterPro" id="IPR038336">
    <property type="entry name" value="NET_sf"/>
</dbReference>
<dbReference type="PANTHER" id="PTHR22880:SF225">
    <property type="entry name" value="BROMODOMAIN-CONTAINING PROTEIN BET-1-RELATED"/>
    <property type="match status" value="1"/>
</dbReference>
<dbReference type="PANTHER" id="PTHR22880">
    <property type="entry name" value="FALZ-RELATED BROMODOMAIN-CONTAINING PROTEINS"/>
    <property type="match status" value="1"/>
</dbReference>
<dbReference type="Pfam" id="PF17035">
    <property type="entry name" value="BET"/>
    <property type="match status" value="1"/>
</dbReference>
<dbReference type="Pfam" id="PF00439">
    <property type="entry name" value="Bromodomain"/>
    <property type="match status" value="2"/>
</dbReference>
<dbReference type="PRINTS" id="PR00503">
    <property type="entry name" value="BROMODOMAIN"/>
</dbReference>
<dbReference type="SMART" id="SM00297">
    <property type="entry name" value="BROMO"/>
    <property type="match status" value="2"/>
</dbReference>
<dbReference type="SUPFAM" id="SSF47370">
    <property type="entry name" value="Bromodomain"/>
    <property type="match status" value="2"/>
</dbReference>
<dbReference type="PROSITE" id="PS00633">
    <property type="entry name" value="BROMODOMAIN_1"/>
    <property type="match status" value="1"/>
</dbReference>
<dbReference type="PROSITE" id="PS50014">
    <property type="entry name" value="BROMODOMAIN_2"/>
    <property type="match status" value="2"/>
</dbReference>
<dbReference type="PROSITE" id="PS51525">
    <property type="entry name" value="NET"/>
    <property type="match status" value="1"/>
</dbReference>
<comment type="function">
    <text>Component of the SWR1 complex which mediates the ATP-dependent exchange of histone H2A for the H2A variant HZT1 leading to transcriptional regulation of selected genes by chromatin remodeling.</text>
</comment>
<comment type="subunit">
    <text evidence="6">Component of the SWR1 chromatin-remodeling complex.</text>
</comment>
<comment type="subcellular location">
    <subcellularLocation>
        <location evidence="4">Nucleus</location>
    </subcellularLocation>
</comment>
<comment type="similarity">
    <text evidence="7">Belongs to the BET family.</text>
</comment>
<feature type="chain" id="PRO_0000211220" description="SWR1 complex bromodomain subunit bdf1">
    <location>
        <begin position="1"/>
        <end position="578"/>
    </location>
</feature>
<feature type="domain" description="Bromo 1" evidence="1">
    <location>
        <begin position="84"/>
        <end position="190"/>
    </location>
</feature>
<feature type="domain" description="Bromo 2" evidence="1">
    <location>
        <begin position="251"/>
        <end position="360"/>
    </location>
</feature>
<feature type="domain" description="NET" evidence="2">
    <location>
        <begin position="430"/>
        <end position="510"/>
    </location>
</feature>
<feature type="region of interest" description="Disordered" evidence="3">
    <location>
        <begin position="1"/>
        <end position="89"/>
    </location>
</feature>
<feature type="region of interest" description="Disordered" evidence="3">
    <location>
        <begin position="192"/>
        <end position="254"/>
    </location>
</feature>
<feature type="region of interest" description="Disordered" evidence="3">
    <location>
        <begin position="504"/>
        <end position="578"/>
    </location>
</feature>
<feature type="compositionally biased region" description="Basic and acidic residues" evidence="3">
    <location>
        <begin position="1"/>
        <end position="18"/>
    </location>
</feature>
<feature type="compositionally biased region" description="Polar residues" evidence="3">
    <location>
        <begin position="22"/>
        <end position="36"/>
    </location>
</feature>
<feature type="compositionally biased region" description="Basic and acidic residues" evidence="3">
    <location>
        <begin position="37"/>
        <end position="52"/>
    </location>
</feature>
<feature type="compositionally biased region" description="Basic and acidic residues" evidence="3">
    <location>
        <begin position="60"/>
        <end position="77"/>
    </location>
</feature>
<feature type="compositionally biased region" description="Low complexity" evidence="3">
    <location>
        <begin position="219"/>
        <end position="242"/>
    </location>
</feature>
<feature type="compositionally biased region" description="Basic and acidic residues" evidence="3">
    <location>
        <begin position="526"/>
        <end position="537"/>
    </location>
</feature>
<feature type="compositionally biased region" description="Polar residues" evidence="3">
    <location>
        <begin position="550"/>
        <end position="563"/>
    </location>
</feature>
<feature type="compositionally biased region" description="Acidic residues" evidence="3">
    <location>
        <begin position="566"/>
        <end position="578"/>
    </location>
</feature>
<feature type="modified residue" description="Phosphoserine" evidence="5">
    <location>
        <position position="221"/>
    </location>
</feature>
<feature type="modified residue" description="Phosphoserine" evidence="5">
    <location>
        <position position="223"/>
    </location>
</feature>
<feature type="modified residue" description="Phosphoserine" evidence="5">
    <location>
        <position position="224"/>
    </location>
</feature>
<feature type="modified residue" description="Phosphothreonine" evidence="5">
    <location>
        <position position="225"/>
    </location>
</feature>
<feature type="modified residue" description="Phosphoserine" evidence="5">
    <location>
        <position position="226"/>
    </location>
</feature>
<feature type="modified residue" description="Phosphoserine" evidence="5">
    <location>
        <position position="239"/>
    </location>
</feature>
<feature type="modified residue" description="Phosphoserine" evidence="5">
    <location>
        <position position="511"/>
    </location>
</feature>
<sequence>MSSESRENEVKAETKDEIANDGSPQLNGDNNIQSSDGHNDENEESLSRKRDSSGATVGDLKQEEKESMPKKEPEPTVKKIRGSGMPPPQQKYCLAIVRQLKRTKNSAPFKVPVDPIKQNIPDYPTIVKNPMDLGTIEKKLTSYEYSVPQEFIDDMNLMFSNCFLYNGTESPVGSMGKALQEVFERQLKQLPDAEQPAAAPVKKSKQKSASTAPPRTRRNSSVSSTSASVAASTAPKAASPAVLPEGKPRRRKNNSQMRFCSTVLKELYKRQYESFAFPFYQPVDPVACDCPDYFDVIKEPMDLSTIQSKLNKNEYSTLEEFESDILLMFNNCFTYNPPGTPVHVMGRQLENVFKEKWEARPKFDDATLVKQQEAETDALFDNGEEEEALMSEEEINGAKFAAVDKQISMLQDTLEAMKAKKMNRMRKPRRRDLTKEYGPITYAMQNELAERCNYLSAEQLSNVAEILREEMPWLRDTDEIEIDVGNMKPEVFHRIYRYVCKPDADSSEPASPVLMPTKPEKKKGRVLSETEQAEKIRRLQQQLDRFAGKTSPTSPESNNAANVSDSESDNESESSESA</sequence>
<proteinExistence type="evidence at protein level"/>
<evidence type="ECO:0000255" key="1">
    <source>
        <dbReference type="PROSITE-ProRule" id="PRU00035"/>
    </source>
</evidence>
<evidence type="ECO:0000255" key="2">
    <source>
        <dbReference type="PROSITE-ProRule" id="PRU00857"/>
    </source>
</evidence>
<evidence type="ECO:0000256" key="3">
    <source>
        <dbReference type="SAM" id="MobiDB-lite"/>
    </source>
</evidence>
<evidence type="ECO:0000269" key="4">
    <source>
    </source>
</evidence>
<evidence type="ECO:0000269" key="5">
    <source>
    </source>
</evidence>
<evidence type="ECO:0000269" key="6">
    <source>
    </source>
</evidence>
<evidence type="ECO:0000305" key="7"/>